<organism>
    <name type="scientific">Bacillus cytotoxicus (strain DSM 22905 / CIP 110041 / 391-98 / NVH 391-98)</name>
    <dbReference type="NCBI Taxonomy" id="315749"/>
    <lineage>
        <taxon>Bacteria</taxon>
        <taxon>Bacillati</taxon>
        <taxon>Bacillota</taxon>
        <taxon>Bacilli</taxon>
        <taxon>Bacillales</taxon>
        <taxon>Bacillaceae</taxon>
        <taxon>Bacillus</taxon>
        <taxon>Bacillus cereus group</taxon>
    </lineage>
</organism>
<name>GCSH_BACCN</name>
<sequence length="127" mass="14040">MSIPNHLRYSEEHEWVKTEGNQVVIGITHFAQSELGDIVFVELPEVGATLEANEPFGSVESVKTVSELYAPVSGKVVAVNEELSDQPELVNESPYEGAWMVKVELSDASEVEKLLTAEKYAEMTNQD</sequence>
<evidence type="ECO:0000255" key="1">
    <source>
        <dbReference type="HAMAP-Rule" id="MF_00272"/>
    </source>
</evidence>
<evidence type="ECO:0000255" key="2">
    <source>
        <dbReference type="PROSITE-ProRule" id="PRU01066"/>
    </source>
</evidence>
<feature type="chain" id="PRO_1000078723" description="Glycine cleavage system H protein">
    <location>
        <begin position="1"/>
        <end position="127"/>
    </location>
</feature>
<feature type="domain" description="Lipoyl-binding" evidence="2">
    <location>
        <begin position="22"/>
        <end position="104"/>
    </location>
</feature>
<feature type="modified residue" description="N6-lipoyllysine" evidence="1">
    <location>
        <position position="63"/>
    </location>
</feature>
<proteinExistence type="inferred from homology"/>
<protein>
    <recommendedName>
        <fullName evidence="1">Glycine cleavage system H protein</fullName>
    </recommendedName>
    <alternativeName>
        <fullName evidence="1">Octanoyl/lipoyl carrier protein</fullName>
    </alternativeName>
</protein>
<comment type="function">
    <text evidence="1">The glycine cleavage system catalyzes the degradation of glycine. The H protein shuttles the methylamine group of glycine from the P protein to the T protein.</text>
</comment>
<comment type="function">
    <text evidence="1">Is also involved in protein lipoylation via its role as an octanoyl/lipoyl carrier protein intermediate.</text>
</comment>
<comment type="cofactor">
    <cofactor evidence="1">
        <name>(R)-lipoate</name>
        <dbReference type="ChEBI" id="CHEBI:83088"/>
    </cofactor>
    <text evidence="1">Binds 1 lipoyl cofactor covalently.</text>
</comment>
<comment type="subunit">
    <text evidence="1">The glycine cleavage system is composed of four proteins: P, T, L and H.</text>
</comment>
<comment type="similarity">
    <text evidence="1">Belongs to the GcvH family.</text>
</comment>
<gene>
    <name evidence="1" type="primary">gcvH</name>
    <name type="ordered locus">Bcer98_3586</name>
</gene>
<reference key="1">
    <citation type="journal article" date="2008" name="Chem. Biol. Interact.">
        <title>Extending the Bacillus cereus group genomics to putative food-borne pathogens of different toxicity.</title>
        <authorList>
            <person name="Lapidus A."/>
            <person name="Goltsman E."/>
            <person name="Auger S."/>
            <person name="Galleron N."/>
            <person name="Segurens B."/>
            <person name="Dossat C."/>
            <person name="Land M.L."/>
            <person name="Broussolle V."/>
            <person name="Brillard J."/>
            <person name="Guinebretiere M.-H."/>
            <person name="Sanchis V."/>
            <person name="Nguen-the C."/>
            <person name="Lereclus D."/>
            <person name="Richardson P."/>
            <person name="Wincker P."/>
            <person name="Weissenbach J."/>
            <person name="Ehrlich S.D."/>
            <person name="Sorokin A."/>
        </authorList>
    </citation>
    <scope>NUCLEOTIDE SEQUENCE [LARGE SCALE GENOMIC DNA]</scope>
    <source>
        <strain>DSM 22905 / CIP 110041 / 391-98 / NVH 391-98</strain>
    </source>
</reference>
<keyword id="KW-0450">Lipoyl</keyword>
<dbReference type="EMBL" id="CP000764">
    <property type="protein sequence ID" value="ABS23787.1"/>
    <property type="molecule type" value="Genomic_DNA"/>
</dbReference>
<dbReference type="RefSeq" id="WP_012096038.1">
    <property type="nucleotide sequence ID" value="NC_009674.1"/>
</dbReference>
<dbReference type="SMR" id="A7GUH9"/>
<dbReference type="STRING" id="315749.Bcer98_3586"/>
<dbReference type="GeneID" id="33898840"/>
<dbReference type="KEGG" id="bcy:Bcer98_3586"/>
<dbReference type="eggNOG" id="COG0509">
    <property type="taxonomic scope" value="Bacteria"/>
</dbReference>
<dbReference type="HOGENOM" id="CLU_097408_2_2_9"/>
<dbReference type="OrthoDB" id="9796712at2"/>
<dbReference type="Proteomes" id="UP000002300">
    <property type="component" value="Chromosome"/>
</dbReference>
<dbReference type="GO" id="GO:0005829">
    <property type="term" value="C:cytosol"/>
    <property type="evidence" value="ECO:0007669"/>
    <property type="project" value="TreeGrafter"/>
</dbReference>
<dbReference type="GO" id="GO:0005960">
    <property type="term" value="C:glycine cleavage complex"/>
    <property type="evidence" value="ECO:0007669"/>
    <property type="project" value="InterPro"/>
</dbReference>
<dbReference type="GO" id="GO:0019464">
    <property type="term" value="P:glycine decarboxylation via glycine cleavage system"/>
    <property type="evidence" value="ECO:0007669"/>
    <property type="project" value="UniProtKB-UniRule"/>
</dbReference>
<dbReference type="CDD" id="cd06848">
    <property type="entry name" value="GCS_H"/>
    <property type="match status" value="1"/>
</dbReference>
<dbReference type="Gene3D" id="2.40.50.100">
    <property type="match status" value="1"/>
</dbReference>
<dbReference type="HAMAP" id="MF_00272">
    <property type="entry name" value="GcvH"/>
    <property type="match status" value="1"/>
</dbReference>
<dbReference type="InterPro" id="IPR003016">
    <property type="entry name" value="2-oxoA_DH_lipoyl-BS"/>
</dbReference>
<dbReference type="InterPro" id="IPR000089">
    <property type="entry name" value="Biotin_lipoyl"/>
</dbReference>
<dbReference type="InterPro" id="IPR002930">
    <property type="entry name" value="GCV_H"/>
</dbReference>
<dbReference type="InterPro" id="IPR033753">
    <property type="entry name" value="GCV_H/Fam206"/>
</dbReference>
<dbReference type="InterPro" id="IPR017453">
    <property type="entry name" value="GCV_H_sub"/>
</dbReference>
<dbReference type="InterPro" id="IPR011053">
    <property type="entry name" value="Single_hybrid_motif"/>
</dbReference>
<dbReference type="NCBIfam" id="TIGR00527">
    <property type="entry name" value="gcvH"/>
    <property type="match status" value="1"/>
</dbReference>
<dbReference type="NCBIfam" id="NF002270">
    <property type="entry name" value="PRK01202.1"/>
    <property type="match status" value="1"/>
</dbReference>
<dbReference type="PANTHER" id="PTHR11715">
    <property type="entry name" value="GLYCINE CLEAVAGE SYSTEM H PROTEIN"/>
    <property type="match status" value="1"/>
</dbReference>
<dbReference type="PANTHER" id="PTHR11715:SF3">
    <property type="entry name" value="GLYCINE CLEAVAGE SYSTEM H PROTEIN-RELATED"/>
    <property type="match status" value="1"/>
</dbReference>
<dbReference type="Pfam" id="PF01597">
    <property type="entry name" value="GCV_H"/>
    <property type="match status" value="1"/>
</dbReference>
<dbReference type="SUPFAM" id="SSF51230">
    <property type="entry name" value="Single hybrid motif"/>
    <property type="match status" value="1"/>
</dbReference>
<dbReference type="PROSITE" id="PS50968">
    <property type="entry name" value="BIOTINYL_LIPOYL"/>
    <property type="match status" value="1"/>
</dbReference>
<dbReference type="PROSITE" id="PS00189">
    <property type="entry name" value="LIPOYL"/>
    <property type="match status" value="1"/>
</dbReference>
<accession>A7GUH9</accession>